<sequence length="273" mass="29381">MTDRYAVFGNPISHSKSPLIHGIFANETQQVLDYEAILAPKDGFESCLKLFWSQNGKGANVTAPFKEQAFNLCDELSEEAKLAGAVNTLTLLTNGKVRGDNTDGLGLVADLIRNISSLEGKRVLLLGAGGAARGSVLPLLKAGLKVYIHNRTQEKAEKLVEIFTPFGDVKALSIAELIAPFDIIINSTSSSLSGDVPAIPSCVIGVESLCYDMMYSKEMTSFNSWALELGAVKAIDGLGMLVGQAAKSFELWRGVTPEVDTTIKLLREKIKSE</sequence>
<protein>
    <recommendedName>
        <fullName evidence="1">Shikimate dehydrogenase (NADP(+))</fullName>
        <shortName evidence="1">SDH</shortName>
        <ecNumber evidence="1">1.1.1.25</ecNumber>
    </recommendedName>
</protein>
<comment type="function">
    <text evidence="1">Involved in the biosynthesis of the chorismate, which leads to the biosynthesis of aromatic amino acids. Catalyzes the reversible NADPH linked reduction of 3-dehydroshikimate (DHSA) to yield shikimate (SA).</text>
</comment>
<comment type="catalytic activity">
    <reaction evidence="1">
        <text>shikimate + NADP(+) = 3-dehydroshikimate + NADPH + H(+)</text>
        <dbReference type="Rhea" id="RHEA:17737"/>
        <dbReference type="ChEBI" id="CHEBI:15378"/>
        <dbReference type="ChEBI" id="CHEBI:16630"/>
        <dbReference type="ChEBI" id="CHEBI:36208"/>
        <dbReference type="ChEBI" id="CHEBI:57783"/>
        <dbReference type="ChEBI" id="CHEBI:58349"/>
        <dbReference type="EC" id="1.1.1.25"/>
    </reaction>
</comment>
<comment type="pathway">
    <text evidence="1">Metabolic intermediate biosynthesis; chorismate biosynthesis; chorismate from D-erythrose 4-phosphate and phosphoenolpyruvate: step 4/7.</text>
</comment>
<comment type="subunit">
    <text evidence="1">Homodimer.</text>
</comment>
<comment type="similarity">
    <text evidence="1">Belongs to the shikimate dehydrogenase family.</text>
</comment>
<dbReference type="EC" id="1.1.1.25" evidence="1"/>
<dbReference type="EMBL" id="CP000961">
    <property type="protein sequence ID" value="ACA84348.1"/>
    <property type="molecule type" value="Genomic_DNA"/>
</dbReference>
<dbReference type="RefSeq" id="WP_012322697.1">
    <property type="nucleotide sequence ID" value="NC_010506.1"/>
</dbReference>
<dbReference type="SMR" id="B1KD01"/>
<dbReference type="STRING" id="392500.Swoo_0047"/>
<dbReference type="KEGG" id="swd:Swoo_0047"/>
<dbReference type="eggNOG" id="COG0169">
    <property type="taxonomic scope" value="Bacteria"/>
</dbReference>
<dbReference type="HOGENOM" id="CLU_044063_2_1_6"/>
<dbReference type="UniPathway" id="UPA00053">
    <property type="reaction ID" value="UER00087"/>
</dbReference>
<dbReference type="Proteomes" id="UP000002168">
    <property type="component" value="Chromosome"/>
</dbReference>
<dbReference type="GO" id="GO:0005829">
    <property type="term" value="C:cytosol"/>
    <property type="evidence" value="ECO:0007669"/>
    <property type="project" value="TreeGrafter"/>
</dbReference>
<dbReference type="GO" id="GO:0050661">
    <property type="term" value="F:NADP binding"/>
    <property type="evidence" value="ECO:0007669"/>
    <property type="project" value="InterPro"/>
</dbReference>
<dbReference type="GO" id="GO:0004764">
    <property type="term" value="F:shikimate 3-dehydrogenase (NADP+) activity"/>
    <property type="evidence" value="ECO:0007669"/>
    <property type="project" value="UniProtKB-UniRule"/>
</dbReference>
<dbReference type="GO" id="GO:0008652">
    <property type="term" value="P:amino acid biosynthetic process"/>
    <property type="evidence" value="ECO:0007669"/>
    <property type="project" value="UniProtKB-KW"/>
</dbReference>
<dbReference type="GO" id="GO:0009073">
    <property type="term" value="P:aromatic amino acid family biosynthetic process"/>
    <property type="evidence" value="ECO:0007669"/>
    <property type="project" value="UniProtKB-KW"/>
</dbReference>
<dbReference type="GO" id="GO:0009423">
    <property type="term" value="P:chorismate biosynthetic process"/>
    <property type="evidence" value="ECO:0007669"/>
    <property type="project" value="UniProtKB-UniRule"/>
</dbReference>
<dbReference type="GO" id="GO:0019632">
    <property type="term" value="P:shikimate metabolic process"/>
    <property type="evidence" value="ECO:0007669"/>
    <property type="project" value="InterPro"/>
</dbReference>
<dbReference type="CDD" id="cd01065">
    <property type="entry name" value="NAD_bind_Shikimate_DH"/>
    <property type="match status" value="1"/>
</dbReference>
<dbReference type="FunFam" id="3.40.50.10860:FF:000006">
    <property type="entry name" value="Shikimate dehydrogenase (NADP(+))"/>
    <property type="match status" value="1"/>
</dbReference>
<dbReference type="FunFam" id="3.40.50.720:FF:000104">
    <property type="entry name" value="Shikimate dehydrogenase (NADP(+))"/>
    <property type="match status" value="1"/>
</dbReference>
<dbReference type="Gene3D" id="3.40.50.10860">
    <property type="entry name" value="Leucine Dehydrogenase, chain A, domain 1"/>
    <property type="match status" value="1"/>
</dbReference>
<dbReference type="Gene3D" id="3.40.50.720">
    <property type="entry name" value="NAD(P)-binding Rossmann-like Domain"/>
    <property type="match status" value="1"/>
</dbReference>
<dbReference type="HAMAP" id="MF_00222">
    <property type="entry name" value="Shikimate_DH_AroE"/>
    <property type="match status" value="1"/>
</dbReference>
<dbReference type="InterPro" id="IPR046346">
    <property type="entry name" value="Aminoacid_DH-like_N_sf"/>
</dbReference>
<dbReference type="InterPro" id="IPR036291">
    <property type="entry name" value="NAD(P)-bd_dom_sf"/>
</dbReference>
<dbReference type="InterPro" id="IPR041121">
    <property type="entry name" value="SDH_C"/>
</dbReference>
<dbReference type="InterPro" id="IPR011342">
    <property type="entry name" value="Shikimate_DH"/>
</dbReference>
<dbReference type="InterPro" id="IPR013708">
    <property type="entry name" value="Shikimate_DH-bd_N"/>
</dbReference>
<dbReference type="InterPro" id="IPR022893">
    <property type="entry name" value="Shikimate_DH_fam"/>
</dbReference>
<dbReference type="InterPro" id="IPR006151">
    <property type="entry name" value="Shikm_DH/Glu-tRNA_Rdtase"/>
</dbReference>
<dbReference type="NCBIfam" id="TIGR00507">
    <property type="entry name" value="aroE"/>
    <property type="match status" value="1"/>
</dbReference>
<dbReference type="NCBIfam" id="NF001310">
    <property type="entry name" value="PRK00258.1-2"/>
    <property type="match status" value="1"/>
</dbReference>
<dbReference type="PANTHER" id="PTHR21089:SF1">
    <property type="entry name" value="BIFUNCTIONAL 3-DEHYDROQUINATE DEHYDRATASE_SHIKIMATE DEHYDROGENASE, CHLOROPLASTIC"/>
    <property type="match status" value="1"/>
</dbReference>
<dbReference type="PANTHER" id="PTHR21089">
    <property type="entry name" value="SHIKIMATE DEHYDROGENASE"/>
    <property type="match status" value="1"/>
</dbReference>
<dbReference type="Pfam" id="PF18317">
    <property type="entry name" value="SDH_C"/>
    <property type="match status" value="1"/>
</dbReference>
<dbReference type="Pfam" id="PF01488">
    <property type="entry name" value="Shikimate_DH"/>
    <property type="match status" value="1"/>
</dbReference>
<dbReference type="Pfam" id="PF08501">
    <property type="entry name" value="Shikimate_dh_N"/>
    <property type="match status" value="1"/>
</dbReference>
<dbReference type="SUPFAM" id="SSF53223">
    <property type="entry name" value="Aminoacid dehydrogenase-like, N-terminal domain"/>
    <property type="match status" value="1"/>
</dbReference>
<dbReference type="SUPFAM" id="SSF51735">
    <property type="entry name" value="NAD(P)-binding Rossmann-fold domains"/>
    <property type="match status" value="1"/>
</dbReference>
<accession>B1KD01</accession>
<proteinExistence type="inferred from homology"/>
<keyword id="KW-0028">Amino-acid biosynthesis</keyword>
<keyword id="KW-0057">Aromatic amino acid biosynthesis</keyword>
<keyword id="KW-0521">NADP</keyword>
<keyword id="KW-0560">Oxidoreductase</keyword>
<keyword id="KW-1185">Reference proteome</keyword>
<organism>
    <name type="scientific">Shewanella woodyi (strain ATCC 51908 / MS32)</name>
    <dbReference type="NCBI Taxonomy" id="392500"/>
    <lineage>
        <taxon>Bacteria</taxon>
        <taxon>Pseudomonadati</taxon>
        <taxon>Pseudomonadota</taxon>
        <taxon>Gammaproteobacteria</taxon>
        <taxon>Alteromonadales</taxon>
        <taxon>Shewanellaceae</taxon>
        <taxon>Shewanella</taxon>
    </lineage>
</organism>
<feature type="chain" id="PRO_1000100140" description="Shikimate dehydrogenase (NADP(+))">
    <location>
        <begin position="1"/>
        <end position="273"/>
    </location>
</feature>
<feature type="active site" description="Proton acceptor" evidence="1">
    <location>
        <position position="66"/>
    </location>
</feature>
<feature type="binding site" evidence="1">
    <location>
        <begin position="15"/>
        <end position="17"/>
    </location>
    <ligand>
        <name>shikimate</name>
        <dbReference type="ChEBI" id="CHEBI:36208"/>
    </ligand>
</feature>
<feature type="binding site" evidence="1">
    <location>
        <position position="62"/>
    </location>
    <ligand>
        <name>shikimate</name>
        <dbReference type="ChEBI" id="CHEBI:36208"/>
    </ligand>
</feature>
<feature type="binding site" evidence="1">
    <location>
        <position position="78"/>
    </location>
    <ligand>
        <name>NADP(+)</name>
        <dbReference type="ChEBI" id="CHEBI:58349"/>
    </ligand>
</feature>
<feature type="binding site" evidence="1">
    <location>
        <position position="87"/>
    </location>
    <ligand>
        <name>shikimate</name>
        <dbReference type="ChEBI" id="CHEBI:36208"/>
    </ligand>
</feature>
<feature type="binding site" evidence="1">
    <location>
        <position position="103"/>
    </location>
    <ligand>
        <name>shikimate</name>
        <dbReference type="ChEBI" id="CHEBI:36208"/>
    </ligand>
</feature>
<feature type="binding site" evidence="1">
    <location>
        <begin position="127"/>
        <end position="131"/>
    </location>
    <ligand>
        <name>NADP(+)</name>
        <dbReference type="ChEBI" id="CHEBI:58349"/>
    </ligand>
</feature>
<feature type="binding site" evidence="1">
    <location>
        <begin position="150"/>
        <end position="155"/>
    </location>
    <ligand>
        <name>NADP(+)</name>
        <dbReference type="ChEBI" id="CHEBI:58349"/>
    </ligand>
</feature>
<feature type="binding site" evidence="1">
    <location>
        <position position="213"/>
    </location>
    <ligand>
        <name>NADP(+)</name>
        <dbReference type="ChEBI" id="CHEBI:58349"/>
    </ligand>
</feature>
<feature type="binding site" evidence="1">
    <location>
        <position position="215"/>
    </location>
    <ligand>
        <name>shikimate</name>
        <dbReference type="ChEBI" id="CHEBI:36208"/>
    </ligand>
</feature>
<feature type="binding site" evidence="1">
    <location>
        <position position="237"/>
    </location>
    <ligand>
        <name>NADP(+)</name>
        <dbReference type="ChEBI" id="CHEBI:58349"/>
    </ligand>
</feature>
<name>AROE_SHEWM</name>
<reference key="1">
    <citation type="submission" date="2008-02" db="EMBL/GenBank/DDBJ databases">
        <title>Complete sequence of Shewanella woodyi ATCC 51908.</title>
        <authorList>
            <consortium name="US DOE Joint Genome Institute"/>
            <person name="Copeland A."/>
            <person name="Lucas S."/>
            <person name="Lapidus A."/>
            <person name="Glavina del Rio T."/>
            <person name="Dalin E."/>
            <person name="Tice H."/>
            <person name="Bruce D."/>
            <person name="Goodwin L."/>
            <person name="Pitluck S."/>
            <person name="Sims D."/>
            <person name="Brettin T."/>
            <person name="Detter J.C."/>
            <person name="Han C."/>
            <person name="Kuske C.R."/>
            <person name="Schmutz J."/>
            <person name="Larimer F."/>
            <person name="Land M."/>
            <person name="Hauser L."/>
            <person name="Kyrpides N."/>
            <person name="Lykidis A."/>
            <person name="Zhao J.-S."/>
            <person name="Richardson P."/>
        </authorList>
    </citation>
    <scope>NUCLEOTIDE SEQUENCE [LARGE SCALE GENOMIC DNA]</scope>
    <source>
        <strain>ATCC 51908 / MS32</strain>
    </source>
</reference>
<gene>
    <name evidence="1" type="primary">aroE</name>
    <name type="ordered locus">Swoo_0047</name>
</gene>
<evidence type="ECO:0000255" key="1">
    <source>
        <dbReference type="HAMAP-Rule" id="MF_00222"/>
    </source>
</evidence>